<proteinExistence type="inferred from homology"/>
<comment type="function">
    <text evidence="1">Binds to the 23S rRNA.</text>
</comment>
<comment type="subunit">
    <text evidence="1">Part of the 50S ribosomal subunit.</text>
</comment>
<comment type="similarity">
    <text evidence="1">Belongs to the universal ribosomal protein uL15 family.</text>
</comment>
<gene>
    <name evidence="1" type="primary">rplO</name>
    <name type="ordered locus">RALTA_A2924</name>
</gene>
<sequence>MQLNNLKPAAGSKHAKRRVGRGIGSGLGKTAGRGHKGQKSRSGGFHKVGFEGGQMPLYRRLPKRGFTSLTKAFTAEVTLRDIERLEAAEVDLLVLKQAGLVGDLVKSAKVIKAGELTRKVTIKGLGATAGAKAAIEAAGGQIAA</sequence>
<accession>B3R7E9</accession>
<feature type="chain" id="PRO_1000142802" description="Large ribosomal subunit protein uL15">
    <location>
        <begin position="1"/>
        <end position="144"/>
    </location>
</feature>
<feature type="region of interest" description="Disordered" evidence="2">
    <location>
        <begin position="1"/>
        <end position="48"/>
    </location>
</feature>
<feature type="compositionally biased region" description="Gly residues" evidence="2">
    <location>
        <begin position="21"/>
        <end position="31"/>
    </location>
</feature>
<dbReference type="EMBL" id="CU633749">
    <property type="protein sequence ID" value="CAQ70849.1"/>
    <property type="molecule type" value="Genomic_DNA"/>
</dbReference>
<dbReference type="RefSeq" id="WP_012354135.1">
    <property type="nucleotide sequence ID" value="NC_010528.1"/>
</dbReference>
<dbReference type="SMR" id="B3R7E9"/>
<dbReference type="GeneID" id="29762674"/>
<dbReference type="KEGG" id="cti:RALTA_A2924"/>
<dbReference type="eggNOG" id="COG0200">
    <property type="taxonomic scope" value="Bacteria"/>
</dbReference>
<dbReference type="HOGENOM" id="CLU_055188_4_2_4"/>
<dbReference type="BioCyc" id="CTAI977880:RALTA_RS14260-MONOMER"/>
<dbReference type="Proteomes" id="UP000001692">
    <property type="component" value="Chromosome 1"/>
</dbReference>
<dbReference type="GO" id="GO:0022625">
    <property type="term" value="C:cytosolic large ribosomal subunit"/>
    <property type="evidence" value="ECO:0007669"/>
    <property type="project" value="TreeGrafter"/>
</dbReference>
<dbReference type="GO" id="GO:0019843">
    <property type="term" value="F:rRNA binding"/>
    <property type="evidence" value="ECO:0007669"/>
    <property type="project" value="UniProtKB-UniRule"/>
</dbReference>
<dbReference type="GO" id="GO:0003735">
    <property type="term" value="F:structural constituent of ribosome"/>
    <property type="evidence" value="ECO:0007669"/>
    <property type="project" value="InterPro"/>
</dbReference>
<dbReference type="GO" id="GO:0006412">
    <property type="term" value="P:translation"/>
    <property type="evidence" value="ECO:0007669"/>
    <property type="project" value="UniProtKB-UniRule"/>
</dbReference>
<dbReference type="Gene3D" id="3.100.10.10">
    <property type="match status" value="1"/>
</dbReference>
<dbReference type="HAMAP" id="MF_01341">
    <property type="entry name" value="Ribosomal_uL15"/>
    <property type="match status" value="1"/>
</dbReference>
<dbReference type="InterPro" id="IPR030878">
    <property type="entry name" value="Ribosomal_uL15"/>
</dbReference>
<dbReference type="InterPro" id="IPR021131">
    <property type="entry name" value="Ribosomal_uL15/eL18"/>
</dbReference>
<dbReference type="InterPro" id="IPR036227">
    <property type="entry name" value="Ribosomal_uL15/eL18_sf"/>
</dbReference>
<dbReference type="InterPro" id="IPR005749">
    <property type="entry name" value="Ribosomal_uL15_bac-type"/>
</dbReference>
<dbReference type="NCBIfam" id="TIGR01071">
    <property type="entry name" value="rplO_bact"/>
    <property type="match status" value="1"/>
</dbReference>
<dbReference type="PANTHER" id="PTHR12934">
    <property type="entry name" value="50S RIBOSOMAL PROTEIN L15"/>
    <property type="match status" value="1"/>
</dbReference>
<dbReference type="PANTHER" id="PTHR12934:SF11">
    <property type="entry name" value="LARGE RIBOSOMAL SUBUNIT PROTEIN UL15M"/>
    <property type="match status" value="1"/>
</dbReference>
<dbReference type="Pfam" id="PF00828">
    <property type="entry name" value="Ribosomal_L27A"/>
    <property type="match status" value="1"/>
</dbReference>
<dbReference type="SUPFAM" id="SSF52080">
    <property type="entry name" value="Ribosomal proteins L15p and L18e"/>
    <property type="match status" value="1"/>
</dbReference>
<keyword id="KW-0687">Ribonucleoprotein</keyword>
<keyword id="KW-0689">Ribosomal protein</keyword>
<keyword id="KW-0694">RNA-binding</keyword>
<keyword id="KW-0699">rRNA-binding</keyword>
<evidence type="ECO:0000255" key="1">
    <source>
        <dbReference type="HAMAP-Rule" id="MF_01341"/>
    </source>
</evidence>
<evidence type="ECO:0000256" key="2">
    <source>
        <dbReference type="SAM" id="MobiDB-lite"/>
    </source>
</evidence>
<evidence type="ECO:0000305" key="3"/>
<protein>
    <recommendedName>
        <fullName evidence="1">Large ribosomal subunit protein uL15</fullName>
    </recommendedName>
    <alternativeName>
        <fullName evidence="3">50S ribosomal protein L15</fullName>
    </alternativeName>
</protein>
<reference key="1">
    <citation type="journal article" date="2008" name="Genome Res.">
        <title>Genome sequence of the beta-rhizobium Cupriavidus taiwanensis and comparative genomics of rhizobia.</title>
        <authorList>
            <person name="Amadou C."/>
            <person name="Pascal G."/>
            <person name="Mangenot S."/>
            <person name="Glew M."/>
            <person name="Bontemps C."/>
            <person name="Capela D."/>
            <person name="Carrere S."/>
            <person name="Cruveiller S."/>
            <person name="Dossat C."/>
            <person name="Lajus A."/>
            <person name="Marchetti M."/>
            <person name="Poinsot V."/>
            <person name="Rouy Z."/>
            <person name="Servin B."/>
            <person name="Saad M."/>
            <person name="Schenowitz C."/>
            <person name="Barbe V."/>
            <person name="Batut J."/>
            <person name="Medigue C."/>
            <person name="Masson-Boivin C."/>
        </authorList>
    </citation>
    <scope>NUCLEOTIDE SEQUENCE [LARGE SCALE GENOMIC DNA]</scope>
    <source>
        <strain>DSM 17343 / BCRC 17206 / CCUG 44338 / CIP 107171 / LMG 19424 / R1</strain>
    </source>
</reference>
<name>RL15_CUPTR</name>
<organism>
    <name type="scientific">Cupriavidus taiwanensis (strain DSM 17343 / BCRC 17206 / CCUG 44338 / CIP 107171 / LMG 19424 / R1)</name>
    <name type="common">Ralstonia taiwanensis (strain LMG 19424)</name>
    <dbReference type="NCBI Taxonomy" id="977880"/>
    <lineage>
        <taxon>Bacteria</taxon>
        <taxon>Pseudomonadati</taxon>
        <taxon>Pseudomonadota</taxon>
        <taxon>Betaproteobacteria</taxon>
        <taxon>Burkholderiales</taxon>
        <taxon>Burkholderiaceae</taxon>
        <taxon>Cupriavidus</taxon>
    </lineage>
</organism>